<comment type="function">
    <text evidence="1">Plays a central role during spermatogenesis by repressing transposable elements and preventing their mobilization, which is essential for the germline integrity. Acts via the piRNA metabolic process, which mediates the repression of transposable elements during meiosis by forming complexes composed of piRNAs and Piwi proteins and governs the methylation and subsequent repression of transposons. Its association with piP-bodies suggests a participation in the secondary piRNAs metabolic process. Required for the localization of germ-cell factors to the meiotic nuage (By similarity).</text>
</comment>
<comment type="subunit">
    <text evidence="1">Interacts with SMARCB1, SIN3B and DDX4. Interacts with piRNA-associated proteins TDRD1, PIWIL1 and PIWIL2 (By similarity). Interacts with TEX19 (By similarity).</text>
</comment>
<comment type="subcellular location">
    <subcellularLocation>
        <location evidence="1">Cytoplasm</location>
    </subcellularLocation>
    <subcellularLocation>
        <location evidence="1">Nucleus</location>
    </subcellularLocation>
    <text evidence="1">Component of the meiotic nuage, also named P granule, a germ-cell-specific organelle required to repress transposon activity during meiosis. Specifically localizes to piP-bodies, a subset of the nuage which contains secondary piRNAs (By similarity).</text>
</comment>
<comment type="similarity">
    <text evidence="4">Belongs to the maelstrom family.</text>
</comment>
<accession>A4UTQ0</accession>
<evidence type="ECO:0000250" key="1">
    <source>
        <dbReference type="UniProtKB" id="Q8BVN9"/>
    </source>
</evidence>
<evidence type="ECO:0000255" key="2">
    <source>
        <dbReference type="PROSITE-ProRule" id="PRU00267"/>
    </source>
</evidence>
<evidence type="ECO:0000256" key="3">
    <source>
        <dbReference type="SAM" id="MobiDB-lite"/>
    </source>
</evidence>
<evidence type="ECO:0000305" key="4"/>
<reference key="1">
    <citation type="journal article" date="2008" name="Theriogenology">
        <title>Transcripts of enriched germ cells responding to heat shock as potential markers for porcine semen quality.</title>
        <authorList>
            <person name="Gau B.-H."/>
            <person name="Chu I.-M."/>
            <person name="Huang M.-C."/>
            <person name="Yang K.-T."/>
            <person name="Chiou S.-H."/>
            <person name="Fan Y.-H."/>
            <person name="Chen M.-Y."/>
            <person name="Lin J.-H."/>
            <person name="Chuang C.-K."/>
            <person name="Huang S.-Y."/>
            <person name="Lee W.-C."/>
        </authorList>
    </citation>
    <scope>NUCLEOTIDE SEQUENCE [MRNA]</scope>
    <source>
        <tissue>Testis</tissue>
    </source>
</reference>
<feature type="chain" id="PRO_0000367291" description="Protein maelstrom homolog">
    <location>
        <begin position="1"/>
        <end position="434"/>
    </location>
</feature>
<feature type="DNA-binding region" description="HMG box" evidence="2">
    <location>
        <begin position="4"/>
        <end position="73"/>
    </location>
</feature>
<feature type="region of interest" description="Disordered" evidence="3">
    <location>
        <begin position="357"/>
        <end position="387"/>
    </location>
</feature>
<feature type="compositionally biased region" description="Polar residues" evidence="3">
    <location>
        <begin position="363"/>
        <end position="372"/>
    </location>
</feature>
<organism>
    <name type="scientific">Sus scrofa</name>
    <name type="common">Pig</name>
    <dbReference type="NCBI Taxonomy" id="9823"/>
    <lineage>
        <taxon>Eukaryota</taxon>
        <taxon>Metazoa</taxon>
        <taxon>Chordata</taxon>
        <taxon>Craniata</taxon>
        <taxon>Vertebrata</taxon>
        <taxon>Euteleostomi</taxon>
        <taxon>Mammalia</taxon>
        <taxon>Eutheria</taxon>
        <taxon>Laurasiatheria</taxon>
        <taxon>Artiodactyla</taxon>
        <taxon>Suina</taxon>
        <taxon>Suidae</taxon>
        <taxon>Sus</taxon>
    </lineage>
</organism>
<sequence>MPNRRGSRNAYYFFVQEKIPELRRRGLPVARVADAIPYCSADWALLREEEKEKYSEMAREWKAAQGKDAGPWEKQKPVSTPLRRPAMLVPKQNVSPPDMSCLSLKSDQALLGGIFYFLNIFSHGELPPHCEQRFLPCEIGCVKYSLQEGIMADFHSFINPGEIPRGFRFHCQAASDSSHKIPISHFESGHDQATVLQNLYRFIRPNSGKWPPIYCKSDDRARVNWCLKYMAKSSEITQDLELVTVEDLVVGIYQQKFLKEPSKTWVRSLLDVAMWDYSSNTRCKWHEENDILFCALAVCRKIAYCISNSLATLLGIQLTEAHVPLQDYETSNSVTPKMVVLDAGRYQKLRVESSGFSHFSSSNQEQRSNTPTGDYPSGVKISGQSSSVRGRGITRLLESISNSSSNIHKFSTCESSLSPYMSQKDGYKSFSSLS</sequence>
<keyword id="KW-0963">Cytoplasm</keyword>
<keyword id="KW-0217">Developmental protein</keyword>
<keyword id="KW-0221">Differentiation</keyword>
<keyword id="KW-0238">DNA-binding</keyword>
<keyword id="KW-0469">Meiosis</keyword>
<keyword id="KW-0539">Nucleus</keyword>
<keyword id="KW-1185">Reference proteome</keyword>
<keyword id="KW-0943">RNA-mediated gene silencing</keyword>
<keyword id="KW-0744">Spermatogenesis</keyword>
<dbReference type="EMBL" id="EF486859">
    <property type="protein sequence ID" value="ABO87660.1"/>
    <property type="molecule type" value="mRNA"/>
</dbReference>
<dbReference type="RefSeq" id="NP_001090980.1">
    <property type="nucleotide sequence ID" value="NM_001097511.1"/>
</dbReference>
<dbReference type="SMR" id="A4UTQ0"/>
<dbReference type="FunCoup" id="A4UTQ0">
    <property type="interactions" value="103"/>
</dbReference>
<dbReference type="PaxDb" id="9823-ENSSSCP00000023309"/>
<dbReference type="GeneID" id="100048945"/>
<dbReference type="KEGG" id="ssc:100048945"/>
<dbReference type="CTD" id="84944"/>
<dbReference type="eggNOG" id="ENOG502QTQB">
    <property type="taxonomic scope" value="Eukaryota"/>
</dbReference>
<dbReference type="InParanoid" id="A4UTQ0"/>
<dbReference type="OrthoDB" id="24555at2759"/>
<dbReference type="Proteomes" id="UP000008227">
    <property type="component" value="Unplaced"/>
</dbReference>
<dbReference type="Proteomes" id="UP000314985">
    <property type="component" value="Unplaced"/>
</dbReference>
<dbReference type="Proteomes" id="UP000694570">
    <property type="component" value="Unplaced"/>
</dbReference>
<dbReference type="Proteomes" id="UP000694571">
    <property type="component" value="Unplaced"/>
</dbReference>
<dbReference type="Proteomes" id="UP000694720">
    <property type="component" value="Unplaced"/>
</dbReference>
<dbReference type="Proteomes" id="UP000694722">
    <property type="component" value="Unplaced"/>
</dbReference>
<dbReference type="Proteomes" id="UP000694723">
    <property type="component" value="Unplaced"/>
</dbReference>
<dbReference type="Proteomes" id="UP000694724">
    <property type="component" value="Unplaced"/>
</dbReference>
<dbReference type="Proteomes" id="UP000694725">
    <property type="component" value="Unplaced"/>
</dbReference>
<dbReference type="Proteomes" id="UP000694726">
    <property type="component" value="Unplaced"/>
</dbReference>
<dbReference type="Proteomes" id="UP000694727">
    <property type="component" value="Unplaced"/>
</dbReference>
<dbReference type="Proteomes" id="UP000694728">
    <property type="component" value="Unplaced"/>
</dbReference>
<dbReference type="GO" id="GO:0005737">
    <property type="term" value="C:cytoplasm"/>
    <property type="evidence" value="ECO:0000250"/>
    <property type="project" value="UniProtKB"/>
</dbReference>
<dbReference type="GO" id="GO:0005634">
    <property type="term" value="C:nucleus"/>
    <property type="evidence" value="ECO:0000250"/>
    <property type="project" value="UniProtKB"/>
</dbReference>
<dbReference type="GO" id="GO:0043186">
    <property type="term" value="C:P granule"/>
    <property type="evidence" value="ECO:0000250"/>
    <property type="project" value="UniProtKB"/>
</dbReference>
<dbReference type="GO" id="GO:0071547">
    <property type="term" value="C:piP-body"/>
    <property type="evidence" value="ECO:0000250"/>
    <property type="project" value="UniProtKB"/>
</dbReference>
<dbReference type="GO" id="GO:0043565">
    <property type="term" value="F:sequence-specific DNA binding"/>
    <property type="evidence" value="ECO:0000318"/>
    <property type="project" value="GO_Central"/>
</dbReference>
<dbReference type="GO" id="GO:0030154">
    <property type="term" value="P:cell differentiation"/>
    <property type="evidence" value="ECO:0007669"/>
    <property type="project" value="UniProtKB-KW"/>
</dbReference>
<dbReference type="GO" id="GO:0007140">
    <property type="term" value="P:male meiotic nuclear division"/>
    <property type="evidence" value="ECO:0000318"/>
    <property type="project" value="GO_Central"/>
</dbReference>
<dbReference type="GO" id="GO:0045892">
    <property type="term" value="P:negative regulation of DNA-templated transcription"/>
    <property type="evidence" value="ECO:0000318"/>
    <property type="project" value="GO_Central"/>
</dbReference>
<dbReference type="GO" id="GO:0034587">
    <property type="term" value="P:piRNA processing"/>
    <property type="evidence" value="ECO:0000250"/>
    <property type="project" value="UniProtKB"/>
</dbReference>
<dbReference type="GO" id="GO:0060964">
    <property type="term" value="P:regulation of miRNA-mediated gene silencing"/>
    <property type="evidence" value="ECO:0007669"/>
    <property type="project" value="InterPro"/>
</dbReference>
<dbReference type="GO" id="GO:0031047">
    <property type="term" value="P:regulatory ncRNA-mediated gene silencing"/>
    <property type="evidence" value="ECO:0000250"/>
    <property type="project" value="UniProtKB"/>
</dbReference>
<dbReference type="GO" id="GO:0007283">
    <property type="term" value="P:spermatogenesis"/>
    <property type="evidence" value="ECO:0000250"/>
    <property type="project" value="UniProtKB"/>
</dbReference>
<dbReference type="CDD" id="cd21992">
    <property type="entry name" value="HMG-box_MAEL"/>
    <property type="match status" value="1"/>
</dbReference>
<dbReference type="FunFam" id="1.10.30.10:FF:000035">
    <property type="entry name" value="Maelstrom spermatogenic transposon silencer"/>
    <property type="match status" value="1"/>
</dbReference>
<dbReference type="Gene3D" id="1.10.30.10">
    <property type="entry name" value="High mobility group box domain"/>
    <property type="match status" value="1"/>
</dbReference>
<dbReference type="InterPro" id="IPR009071">
    <property type="entry name" value="HMG_box_dom"/>
</dbReference>
<dbReference type="InterPro" id="IPR036910">
    <property type="entry name" value="HMG_box_dom_sf"/>
</dbReference>
<dbReference type="InterPro" id="IPR024970">
    <property type="entry name" value="Maelstrom"/>
</dbReference>
<dbReference type="InterPro" id="IPR039259">
    <property type="entry name" value="Protein_maelstrom"/>
</dbReference>
<dbReference type="PANTHER" id="PTHR21358">
    <property type="entry name" value="PROTEIN MAELSTROM HOMOLOG"/>
    <property type="match status" value="1"/>
</dbReference>
<dbReference type="PANTHER" id="PTHR21358:SF4">
    <property type="entry name" value="PROTEIN MAELSTROM HOMOLOG"/>
    <property type="match status" value="1"/>
</dbReference>
<dbReference type="Pfam" id="PF09011">
    <property type="entry name" value="HMG_box_2"/>
    <property type="match status" value="1"/>
</dbReference>
<dbReference type="Pfam" id="PF13017">
    <property type="entry name" value="Maelstrom"/>
    <property type="match status" value="1"/>
</dbReference>
<dbReference type="SUPFAM" id="SSF47095">
    <property type="entry name" value="HMG-box"/>
    <property type="match status" value="1"/>
</dbReference>
<dbReference type="PROSITE" id="PS50118">
    <property type="entry name" value="HMG_BOX_2"/>
    <property type="match status" value="1"/>
</dbReference>
<name>MAEL_PIG</name>
<protein>
    <recommendedName>
        <fullName>Protein maelstrom homolog</fullName>
    </recommendedName>
</protein>
<gene>
    <name type="primary">MAEL</name>
</gene>
<proteinExistence type="evidence at transcript level"/>